<protein>
    <recommendedName>
        <fullName evidence="1">Cysteine--tRNA ligase</fullName>
        <ecNumber evidence="1">6.1.1.16</ecNumber>
    </recommendedName>
    <alternativeName>
        <fullName evidence="1">Cysteinyl-tRNA synthetase</fullName>
        <shortName evidence="1">CysRS</shortName>
    </alternativeName>
</protein>
<gene>
    <name evidence="1" type="primary">cysS</name>
    <name type="ordered locus">WS0443</name>
</gene>
<keyword id="KW-0030">Aminoacyl-tRNA synthetase</keyword>
<keyword id="KW-0067">ATP-binding</keyword>
<keyword id="KW-0963">Cytoplasm</keyword>
<keyword id="KW-0436">Ligase</keyword>
<keyword id="KW-0479">Metal-binding</keyword>
<keyword id="KW-0547">Nucleotide-binding</keyword>
<keyword id="KW-0648">Protein biosynthesis</keyword>
<keyword id="KW-1185">Reference proteome</keyword>
<keyword id="KW-0862">Zinc</keyword>
<reference key="1">
    <citation type="journal article" date="2003" name="Proc. Natl. Acad. Sci. U.S.A.">
        <title>Complete genome sequence and analysis of Wolinella succinogenes.</title>
        <authorList>
            <person name="Baar C."/>
            <person name="Eppinger M."/>
            <person name="Raddatz G."/>
            <person name="Simon J."/>
            <person name="Lanz C."/>
            <person name="Klimmek O."/>
            <person name="Nandakumar R."/>
            <person name="Gross R."/>
            <person name="Rosinus A."/>
            <person name="Keller H."/>
            <person name="Jagtap P."/>
            <person name="Linke B."/>
            <person name="Meyer F."/>
            <person name="Lederer H."/>
            <person name="Schuster S.C."/>
        </authorList>
    </citation>
    <scope>NUCLEOTIDE SEQUENCE [LARGE SCALE GENOMIC DNA]</scope>
    <source>
        <strain>ATCC 29543 / DSM 1740 / CCUG 13145 / JCM 31913 / LMG 7466 / NCTC 11488 / FDC 602W</strain>
    </source>
</reference>
<sequence>MMIKIFDSVKREKVEFIPLKKGEVSLYVCGPTVYDDSHLGHARSAIAFDLLRRLMEFEGYRVRFVKNFTDIDDKIIKKSLESGEEIGAITERYITSYLEDMQKLGIKRPDIEPRATESLDLMWEMIQSLLQKGIAYQTPRGDIYLDVKQDPSYGKLSGRGEDLEQVSRIESSEEKRDPRDFALWKSYKGQSDVGYESPFGRGRPGWHIECSAMIEKHLAKEGDYAIDIHAGGSDLLFPHHENEACQTRCATGRELAKYWMHNGFVTINGEKMSKSLGNSFFVKDALRVYDGEVLRFYLLSTHYRMGLNFSEEDLLASKKRLDRLYRLKKRVGEGEVGAPSEKFLERLLEGLRDDMNISRALSAMDEMLTLSNEELDSSPKERALQATIRGNLEVLERLLGIGAKSPILYFQMGVSPEEKEKIEELIKERAEAKKAKDFARADEIRKSLSDQGIALLDTPSGTLWERA</sequence>
<evidence type="ECO:0000255" key="1">
    <source>
        <dbReference type="HAMAP-Rule" id="MF_00041"/>
    </source>
</evidence>
<evidence type="ECO:0000256" key="2">
    <source>
        <dbReference type="SAM" id="MobiDB-lite"/>
    </source>
</evidence>
<comment type="catalytic activity">
    <reaction evidence="1">
        <text>tRNA(Cys) + L-cysteine + ATP = L-cysteinyl-tRNA(Cys) + AMP + diphosphate</text>
        <dbReference type="Rhea" id="RHEA:17773"/>
        <dbReference type="Rhea" id="RHEA-COMP:9661"/>
        <dbReference type="Rhea" id="RHEA-COMP:9679"/>
        <dbReference type="ChEBI" id="CHEBI:30616"/>
        <dbReference type="ChEBI" id="CHEBI:33019"/>
        <dbReference type="ChEBI" id="CHEBI:35235"/>
        <dbReference type="ChEBI" id="CHEBI:78442"/>
        <dbReference type="ChEBI" id="CHEBI:78517"/>
        <dbReference type="ChEBI" id="CHEBI:456215"/>
        <dbReference type="EC" id="6.1.1.16"/>
    </reaction>
</comment>
<comment type="cofactor">
    <cofactor evidence="1">
        <name>Zn(2+)</name>
        <dbReference type="ChEBI" id="CHEBI:29105"/>
    </cofactor>
    <text evidence="1">Binds 1 zinc ion per subunit.</text>
</comment>
<comment type="subunit">
    <text evidence="1">Monomer.</text>
</comment>
<comment type="subcellular location">
    <subcellularLocation>
        <location evidence="1">Cytoplasm</location>
    </subcellularLocation>
</comment>
<comment type="similarity">
    <text evidence="1">Belongs to the class-I aminoacyl-tRNA synthetase family.</text>
</comment>
<proteinExistence type="inferred from homology"/>
<name>SYC_WOLSU</name>
<dbReference type="EC" id="6.1.1.16" evidence="1"/>
<dbReference type="EMBL" id="BX571658">
    <property type="protein sequence ID" value="CAE09585.1"/>
    <property type="molecule type" value="Genomic_DNA"/>
</dbReference>
<dbReference type="RefSeq" id="WP_011138385.1">
    <property type="nucleotide sequence ID" value="NC_005090.1"/>
</dbReference>
<dbReference type="SMR" id="Q7MA68"/>
<dbReference type="STRING" id="273121.WS0443"/>
<dbReference type="KEGG" id="wsu:WS0443"/>
<dbReference type="eggNOG" id="COG0215">
    <property type="taxonomic scope" value="Bacteria"/>
</dbReference>
<dbReference type="HOGENOM" id="CLU_013528_0_1_7"/>
<dbReference type="Proteomes" id="UP000000422">
    <property type="component" value="Chromosome"/>
</dbReference>
<dbReference type="GO" id="GO:0005829">
    <property type="term" value="C:cytosol"/>
    <property type="evidence" value="ECO:0007669"/>
    <property type="project" value="TreeGrafter"/>
</dbReference>
<dbReference type="GO" id="GO:0005524">
    <property type="term" value="F:ATP binding"/>
    <property type="evidence" value="ECO:0007669"/>
    <property type="project" value="UniProtKB-UniRule"/>
</dbReference>
<dbReference type="GO" id="GO:0004817">
    <property type="term" value="F:cysteine-tRNA ligase activity"/>
    <property type="evidence" value="ECO:0007669"/>
    <property type="project" value="UniProtKB-UniRule"/>
</dbReference>
<dbReference type="GO" id="GO:0008270">
    <property type="term" value="F:zinc ion binding"/>
    <property type="evidence" value="ECO:0007669"/>
    <property type="project" value="UniProtKB-UniRule"/>
</dbReference>
<dbReference type="GO" id="GO:0006423">
    <property type="term" value="P:cysteinyl-tRNA aminoacylation"/>
    <property type="evidence" value="ECO:0007669"/>
    <property type="project" value="UniProtKB-UniRule"/>
</dbReference>
<dbReference type="CDD" id="cd00672">
    <property type="entry name" value="CysRS_core"/>
    <property type="match status" value="1"/>
</dbReference>
<dbReference type="Gene3D" id="1.20.120.1910">
    <property type="entry name" value="Cysteine-tRNA ligase, C-terminal anti-codon recognition domain"/>
    <property type="match status" value="1"/>
</dbReference>
<dbReference type="Gene3D" id="3.40.50.620">
    <property type="entry name" value="HUPs"/>
    <property type="match status" value="1"/>
</dbReference>
<dbReference type="HAMAP" id="MF_00041">
    <property type="entry name" value="Cys_tRNA_synth"/>
    <property type="match status" value="1"/>
</dbReference>
<dbReference type="InterPro" id="IPR015803">
    <property type="entry name" value="Cys-tRNA-ligase"/>
</dbReference>
<dbReference type="InterPro" id="IPR024909">
    <property type="entry name" value="Cys-tRNA/MSH_ligase"/>
</dbReference>
<dbReference type="InterPro" id="IPR056411">
    <property type="entry name" value="CysS_C"/>
</dbReference>
<dbReference type="InterPro" id="IPR014729">
    <property type="entry name" value="Rossmann-like_a/b/a_fold"/>
</dbReference>
<dbReference type="InterPro" id="IPR032678">
    <property type="entry name" value="tRNA-synt_1_cat_dom"/>
</dbReference>
<dbReference type="InterPro" id="IPR009080">
    <property type="entry name" value="tRNAsynth_Ia_anticodon-bd"/>
</dbReference>
<dbReference type="NCBIfam" id="TIGR00435">
    <property type="entry name" value="cysS"/>
    <property type="match status" value="1"/>
</dbReference>
<dbReference type="PANTHER" id="PTHR10890:SF3">
    <property type="entry name" value="CYSTEINE--TRNA LIGASE, CYTOPLASMIC"/>
    <property type="match status" value="1"/>
</dbReference>
<dbReference type="PANTHER" id="PTHR10890">
    <property type="entry name" value="CYSTEINYL-TRNA SYNTHETASE"/>
    <property type="match status" value="1"/>
</dbReference>
<dbReference type="Pfam" id="PF23493">
    <property type="entry name" value="CysS_C"/>
    <property type="match status" value="1"/>
</dbReference>
<dbReference type="Pfam" id="PF01406">
    <property type="entry name" value="tRNA-synt_1e"/>
    <property type="match status" value="1"/>
</dbReference>
<dbReference type="PRINTS" id="PR00983">
    <property type="entry name" value="TRNASYNTHCYS"/>
</dbReference>
<dbReference type="SUPFAM" id="SSF47323">
    <property type="entry name" value="Anticodon-binding domain of a subclass of class I aminoacyl-tRNA synthetases"/>
    <property type="match status" value="1"/>
</dbReference>
<dbReference type="SUPFAM" id="SSF52374">
    <property type="entry name" value="Nucleotidylyl transferase"/>
    <property type="match status" value="1"/>
</dbReference>
<feature type="chain" id="PRO_0000159524" description="Cysteine--tRNA ligase">
    <location>
        <begin position="1"/>
        <end position="467"/>
    </location>
</feature>
<feature type="region of interest" description="Disordered" evidence="2">
    <location>
        <begin position="155"/>
        <end position="174"/>
    </location>
</feature>
<feature type="short sequence motif" description="'HIGH' region">
    <location>
        <begin position="31"/>
        <end position="41"/>
    </location>
</feature>
<feature type="short sequence motif" description="'KMSKS' region">
    <location>
        <begin position="271"/>
        <end position="275"/>
    </location>
</feature>
<feature type="compositionally biased region" description="Basic and acidic residues" evidence="2">
    <location>
        <begin position="158"/>
        <end position="174"/>
    </location>
</feature>
<feature type="binding site" evidence="1">
    <location>
        <position position="29"/>
    </location>
    <ligand>
        <name>Zn(2+)</name>
        <dbReference type="ChEBI" id="CHEBI:29105"/>
    </ligand>
</feature>
<feature type="binding site" evidence="1">
    <location>
        <position position="210"/>
    </location>
    <ligand>
        <name>Zn(2+)</name>
        <dbReference type="ChEBI" id="CHEBI:29105"/>
    </ligand>
</feature>
<feature type="binding site" evidence="1">
    <location>
        <position position="239"/>
    </location>
    <ligand>
        <name>Zn(2+)</name>
        <dbReference type="ChEBI" id="CHEBI:29105"/>
    </ligand>
</feature>
<feature type="binding site" evidence="1">
    <location>
        <position position="243"/>
    </location>
    <ligand>
        <name>Zn(2+)</name>
        <dbReference type="ChEBI" id="CHEBI:29105"/>
    </ligand>
</feature>
<feature type="binding site" evidence="1">
    <location>
        <position position="274"/>
    </location>
    <ligand>
        <name>ATP</name>
        <dbReference type="ChEBI" id="CHEBI:30616"/>
    </ligand>
</feature>
<organism>
    <name type="scientific">Wolinella succinogenes (strain ATCC 29543 / DSM 1740 / CCUG 13145 / JCM 31913 / LMG 7466 / NCTC 11488 / FDC 602W)</name>
    <name type="common">Vibrio succinogenes</name>
    <dbReference type="NCBI Taxonomy" id="273121"/>
    <lineage>
        <taxon>Bacteria</taxon>
        <taxon>Pseudomonadati</taxon>
        <taxon>Campylobacterota</taxon>
        <taxon>Epsilonproteobacteria</taxon>
        <taxon>Campylobacterales</taxon>
        <taxon>Helicobacteraceae</taxon>
        <taxon>Wolinella</taxon>
    </lineage>
</organism>
<accession>Q7MA68</accession>